<reference key="1">
    <citation type="submission" date="1996-02" db="EMBL/GenBank/DDBJ databases">
        <title>Systematic sequencing of the Escherichia coli genome: analysis of the 4.0 - 6.0 min (189,987 - 281,416bp) region.</title>
        <authorList>
            <person name="Takemoto K."/>
            <person name="Mori H."/>
            <person name="Murayama N."/>
            <person name="Kataoka K."/>
            <person name="Yano M."/>
            <person name="Itoh T."/>
            <person name="Yamamoto Y."/>
            <person name="Inokuchi H."/>
            <person name="Miki T."/>
            <person name="Hatada E."/>
            <person name="Fukuda R."/>
            <person name="Ichihara S."/>
            <person name="Mizuno T."/>
            <person name="Makino K."/>
            <person name="Nakata A."/>
            <person name="Yura T."/>
            <person name="Sampei G."/>
            <person name="Mizobuchi K."/>
        </authorList>
    </citation>
    <scope>NUCLEOTIDE SEQUENCE [LARGE SCALE GENOMIC DNA]</scope>
    <source>
        <strain>K12 / W3110 / ATCC 27325 / DSM 5911</strain>
    </source>
</reference>
<reference key="2">
    <citation type="submission" date="1997-01" db="EMBL/GenBank/DDBJ databases">
        <title>Sequence of minutes 4-25 of Escherichia coli.</title>
        <authorList>
            <person name="Chung E."/>
            <person name="Allen E."/>
            <person name="Araujo R."/>
            <person name="Aparicio A.M."/>
            <person name="Davis K."/>
            <person name="Duncan M."/>
            <person name="Federspiel N."/>
            <person name="Hyman R."/>
            <person name="Kalman S."/>
            <person name="Komp C."/>
            <person name="Kurdi O."/>
            <person name="Lew H."/>
            <person name="Lin D."/>
            <person name="Namath A."/>
            <person name="Oefner P."/>
            <person name="Roberts D."/>
            <person name="Schramm S."/>
            <person name="Davis R.W."/>
        </authorList>
    </citation>
    <scope>NUCLEOTIDE SEQUENCE [LARGE SCALE GENOMIC DNA]</scope>
    <source>
        <strain>K12 / MG1655 / ATCC 47076</strain>
    </source>
</reference>
<reference key="3">
    <citation type="journal article" date="1997" name="Science">
        <title>The complete genome sequence of Escherichia coli K-12.</title>
        <authorList>
            <person name="Blattner F.R."/>
            <person name="Plunkett G. III"/>
            <person name="Bloch C.A."/>
            <person name="Perna N.T."/>
            <person name="Burland V."/>
            <person name="Riley M."/>
            <person name="Collado-Vides J."/>
            <person name="Glasner J.D."/>
            <person name="Rode C.K."/>
            <person name="Mayhew G.F."/>
            <person name="Gregor J."/>
            <person name="Davis N.W."/>
            <person name="Kirkpatrick H.A."/>
            <person name="Goeden M.A."/>
            <person name="Rose D.J."/>
            <person name="Mau B."/>
            <person name="Shao Y."/>
        </authorList>
    </citation>
    <scope>NUCLEOTIDE SEQUENCE [LARGE SCALE GENOMIC DNA]</scope>
    <source>
        <strain>K12 / MG1655 / ATCC 47076</strain>
    </source>
</reference>
<reference key="4">
    <citation type="journal article" date="2006" name="Mol. Syst. Biol.">
        <title>Highly accurate genome sequences of Escherichia coli K-12 strains MG1655 and W3110.</title>
        <authorList>
            <person name="Hayashi K."/>
            <person name="Morooka N."/>
            <person name="Yamamoto Y."/>
            <person name="Fujita K."/>
            <person name="Isono K."/>
            <person name="Choi S."/>
            <person name="Ohtsubo E."/>
            <person name="Baba T."/>
            <person name="Wanner B.L."/>
            <person name="Mori H."/>
            <person name="Horiuchi T."/>
        </authorList>
    </citation>
    <scope>NUCLEOTIDE SEQUENCE [LARGE SCALE GENOMIC DNA]</scope>
    <source>
        <strain>K12 / W3110 / ATCC 27325 / DSM 5911</strain>
    </source>
</reference>
<name>YAFS_ECOLI</name>
<evidence type="ECO:0000256" key="1">
    <source>
        <dbReference type="SAM" id="MobiDB-lite"/>
    </source>
</evidence>
<keyword id="KW-1185">Reference proteome</keyword>
<proteinExistence type="predicted"/>
<dbReference type="EMBL" id="U70214">
    <property type="protein sequence ID" value="AAB08635.1"/>
    <property type="molecule type" value="Genomic_DNA"/>
</dbReference>
<dbReference type="EMBL" id="U00096">
    <property type="protein sequence ID" value="AAC73318.2"/>
    <property type="molecule type" value="Genomic_DNA"/>
</dbReference>
<dbReference type="EMBL" id="AP009048">
    <property type="protein sequence ID" value="BAA77884.1"/>
    <property type="molecule type" value="Genomic_DNA"/>
</dbReference>
<dbReference type="PIR" id="G64745">
    <property type="entry name" value="G64745"/>
</dbReference>
<dbReference type="RefSeq" id="NP_414749.2">
    <property type="nucleotide sequence ID" value="NC_000913.3"/>
</dbReference>
<dbReference type="RefSeq" id="WP_001326702.1">
    <property type="nucleotide sequence ID" value="NZ_SSZK01000029.1"/>
</dbReference>
<dbReference type="SMR" id="P75672"/>
<dbReference type="BioGRID" id="4263462">
    <property type="interactions" value="111"/>
</dbReference>
<dbReference type="FunCoup" id="P75672">
    <property type="interactions" value="59"/>
</dbReference>
<dbReference type="IntAct" id="P75672">
    <property type="interactions" value="2"/>
</dbReference>
<dbReference type="STRING" id="511145.b0213"/>
<dbReference type="PaxDb" id="511145-b0213"/>
<dbReference type="EnsemblBacteria" id="AAC73318">
    <property type="protein sequence ID" value="AAC73318"/>
    <property type="gene ID" value="b0213"/>
</dbReference>
<dbReference type="GeneID" id="944903"/>
<dbReference type="KEGG" id="ecj:JW0203"/>
<dbReference type="KEGG" id="eco:b0213"/>
<dbReference type="KEGG" id="ecoc:C3026_00995"/>
<dbReference type="PATRIC" id="fig|1411691.4.peg.2071"/>
<dbReference type="EchoBASE" id="EB3115"/>
<dbReference type="eggNOG" id="COG2226">
    <property type="taxonomic scope" value="Bacteria"/>
</dbReference>
<dbReference type="HOGENOM" id="CLU_075049_1_0_6"/>
<dbReference type="InParanoid" id="P75672"/>
<dbReference type="OMA" id="CEEQAWP"/>
<dbReference type="OrthoDB" id="6191410at2"/>
<dbReference type="PhylomeDB" id="P75672"/>
<dbReference type="BioCyc" id="EcoCyc:G6100-MONOMER"/>
<dbReference type="PRO" id="PR:P75672"/>
<dbReference type="Proteomes" id="UP000000625">
    <property type="component" value="Chromosome"/>
</dbReference>
<dbReference type="GO" id="GO:0008757">
    <property type="term" value="F:S-adenosylmethionine-dependent methyltransferase activity"/>
    <property type="evidence" value="ECO:0007669"/>
    <property type="project" value="InterPro"/>
</dbReference>
<dbReference type="CDD" id="cd02440">
    <property type="entry name" value="AdoMet_MTases"/>
    <property type="match status" value="1"/>
</dbReference>
<dbReference type="Gene3D" id="3.40.50.150">
    <property type="entry name" value="Vaccinia Virus protein VP39"/>
    <property type="match status" value="1"/>
</dbReference>
<dbReference type="InterPro" id="IPR013216">
    <property type="entry name" value="Methyltransf_11"/>
</dbReference>
<dbReference type="InterPro" id="IPR029063">
    <property type="entry name" value="SAM-dependent_MTases_sf"/>
</dbReference>
<dbReference type="Pfam" id="PF08241">
    <property type="entry name" value="Methyltransf_11"/>
    <property type="match status" value="1"/>
</dbReference>
<dbReference type="SUPFAM" id="SSF53335">
    <property type="entry name" value="S-adenosyl-L-methionine-dependent methyltransferases"/>
    <property type="match status" value="1"/>
</dbReference>
<accession>P75672</accession>
<accession>P71281</accession>
<protein>
    <recommendedName>
        <fullName>Uncharacterized protein YafS</fullName>
    </recommendedName>
</protein>
<sequence length="240" mass="27244">MKPARVPQTVVAPDCWGDLPWGKLYRKALERQLNPWFTKMYGFHLLKIGNLSAEINCEACAVSHQVNVSAQGMPVQVQADPLHLPFADKSVDVCLLAHTLPWCTDPHRLLREADRVLIDDGWLVISGFNPISFMGLRKLVPVLRKTSPYNSRMFTLMRQLDWLSLLNFEVLHASRFHVLPWNKHGGKLLNAHIPALGCLQLIVARKRTIPLTLNPMKQSKNKPRIRQAVGATRQCRKPQA</sequence>
<organism>
    <name type="scientific">Escherichia coli (strain K12)</name>
    <dbReference type="NCBI Taxonomy" id="83333"/>
    <lineage>
        <taxon>Bacteria</taxon>
        <taxon>Pseudomonadati</taxon>
        <taxon>Pseudomonadota</taxon>
        <taxon>Gammaproteobacteria</taxon>
        <taxon>Enterobacterales</taxon>
        <taxon>Enterobacteriaceae</taxon>
        <taxon>Escherichia</taxon>
    </lineage>
</organism>
<gene>
    <name type="primary">yafS</name>
    <name type="ordered locus">b0213</name>
    <name type="ordered locus">JW0203</name>
</gene>
<feature type="chain" id="PRO_0000168542" description="Uncharacterized protein YafS">
    <location>
        <begin position="1"/>
        <end position="240"/>
    </location>
</feature>
<feature type="region of interest" description="Disordered" evidence="1">
    <location>
        <begin position="216"/>
        <end position="240"/>
    </location>
</feature>